<protein>
    <recommendedName>
        <fullName evidence="1">Oxygen-dependent coproporphyrinogen-III oxidase</fullName>
        <shortName evidence="1">CPO</shortName>
        <shortName evidence="1">Coprogen oxidase</shortName>
        <shortName evidence="1">Coproporphyrinogenase</shortName>
        <ecNumber evidence="1">1.3.3.3</ecNumber>
    </recommendedName>
</protein>
<dbReference type="EC" id="1.3.3.3" evidence="1"/>
<dbReference type="EMBL" id="AE017197">
    <property type="protein sequence ID" value="AAU04325.1"/>
    <property type="molecule type" value="Genomic_DNA"/>
</dbReference>
<dbReference type="RefSeq" id="WP_011191299.1">
    <property type="nucleotide sequence ID" value="NC_006142.1"/>
</dbReference>
<dbReference type="SMR" id="Q68VN1"/>
<dbReference type="KEGG" id="rty:RT0874"/>
<dbReference type="eggNOG" id="COG0408">
    <property type="taxonomic scope" value="Bacteria"/>
</dbReference>
<dbReference type="HOGENOM" id="CLU_026169_0_1_5"/>
<dbReference type="OrthoDB" id="9777553at2"/>
<dbReference type="UniPathway" id="UPA00251">
    <property type="reaction ID" value="UER00322"/>
</dbReference>
<dbReference type="Proteomes" id="UP000000604">
    <property type="component" value="Chromosome"/>
</dbReference>
<dbReference type="GO" id="GO:0005737">
    <property type="term" value="C:cytoplasm"/>
    <property type="evidence" value="ECO:0007669"/>
    <property type="project" value="UniProtKB-SubCell"/>
</dbReference>
<dbReference type="GO" id="GO:0004109">
    <property type="term" value="F:coproporphyrinogen oxidase activity"/>
    <property type="evidence" value="ECO:0007669"/>
    <property type="project" value="UniProtKB-UniRule"/>
</dbReference>
<dbReference type="GO" id="GO:0046872">
    <property type="term" value="F:metal ion binding"/>
    <property type="evidence" value="ECO:0007669"/>
    <property type="project" value="UniProtKB-KW"/>
</dbReference>
<dbReference type="GO" id="GO:0042803">
    <property type="term" value="F:protein homodimerization activity"/>
    <property type="evidence" value="ECO:0000250"/>
    <property type="project" value="UniProtKB"/>
</dbReference>
<dbReference type="GO" id="GO:0006782">
    <property type="term" value="P:protoporphyrinogen IX biosynthetic process"/>
    <property type="evidence" value="ECO:0007669"/>
    <property type="project" value="UniProtKB-UniRule"/>
</dbReference>
<dbReference type="FunFam" id="3.40.1500.10:FF:000005">
    <property type="entry name" value="Oxygen-dependent coproporphyrinogen-III oxidase"/>
    <property type="match status" value="1"/>
</dbReference>
<dbReference type="Gene3D" id="3.40.1500.10">
    <property type="entry name" value="Coproporphyrinogen III oxidase, aerobic"/>
    <property type="match status" value="1"/>
</dbReference>
<dbReference type="HAMAP" id="MF_00333">
    <property type="entry name" value="Coprogen_oxidas"/>
    <property type="match status" value="1"/>
</dbReference>
<dbReference type="InterPro" id="IPR001260">
    <property type="entry name" value="Coprogen_oxidase_aer"/>
</dbReference>
<dbReference type="InterPro" id="IPR036406">
    <property type="entry name" value="Coprogen_oxidase_aer_sf"/>
</dbReference>
<dbReference type="InterPro" id="IPR018375">
    <property type="entry name" value="Coprogen_oxidase_CS"/>
</dbReference>
<dbReference type="NCBIfam" id="NF003727">
    <property type="entry name" value="PRK05330.1"/>
    <property type="match status" value="1"/>
</dbReference>
<dbReference type="PANTHER" id="PTHR10755">
    <property type="entry name" value="COPROPORPHYRINOGEN III OXIDASE, MITOCHONDRIAL"/>
    <property type="match status" value="1"/>
</dbReference>
<dbReference type="PANTHER" id="PTHR10755:SF0">
    <property type="entry name" value="OXYGEN-DEPENDENT COPROPORPHYRINOGEN-III OXIDASE, MITOCHONDRIAL"/>
    <property type="match status" value="1"/>
</dbReference>
<dbReference type="Pfam" id="PF01218">
    <property type="entry name" value="Coprogen_oxidas"/>
    <property type="match status" value="1"/>
</dbReference>
<dbReference type="PIRSF" id="PIRSF000166">
    <property type="entry name" value="Coproporphyri_ox"/>
    <property type="match status" value="1"/>
</dbReference>
<dbReference type="PRINTS" id="PR00073">
    <property type="entry name" value="COPRGNOXDASE"/>
</dbReference>
<dbReference type="SUPFAM" id="SSF102886">
    <property type="entry name" value="Coproporphyrinogen III oxidase"/>
    <property type="match status" value="1"/>
</dbReference>
<dbReference type="PROSITE" id="PS01021">
    <property type="entry name" value="COPROGEN_OXIDASE"/>
    <property type="match status" value="1"/>
</dbReference>
<reference key="1">
    <citation type="journal article" date="2004" name="J. Bacteriol.">
        <title>Complete genome sequence of Rickettsia typhi and comparison with sequences of other Rickettsiae.</title>
        <authorList>
            <person name="McLeod M.P."/>
            <person name="Qin X."/>
            <person name="Karpathy S.E."/>
            <person name="Gioia J."/>
            <person name="Highlander S.K."/>
            <person name="Fox G.E."/>
            <person name="McNeill T.Z."/>
            <person name="Jiang H."/>
            <person name="Muzny D."/>
            <person name="Jacob L.S."/>
            <person name="Hawes A.C."/>
            <person name="Sodergren E."/>
            <person name="Gill R."/>
            <person name="Hume J."/>
            <person name="Morgan M."/>
            <person name="Fan G."/>
            <person name="Amin A.G."/>
            <person name="Gibbs R.A."/>
            <person name="Hong C."/>
            <person name="Yu X.-J."/>
            <person name="Walker D.H."/>
            <person name="Weinstock G.M."/>
        </authorList>
    </citation>
    <scope>NUCLEOTIDE SEQUENCE [LARGE SCALE GENOMIC DNA]</scope>
    <source>
        <strain>ATCC VR-144 / Wilmington</strain>
    </source>
</reference>
<name>HEM6_RICTY</name>
<accession>Q68VN1</accession>
<feature type="chain" id="PRO_0000277930" description="Oxygen-dependent coproporphyrinogen-III oxidase">
    <location>
        <begin position="1"/>
        <end position="279"/>
    </location>
</feature>
<feature type="region of interest" description="Important for dimerization" evidence="1">
    <location>
        <begin position="244"/>
        <end position="279"/>
    </location>
</feature>
<feature type="active site" description="Proton donor" evidence="1">
    <location>
        <position position="116"/>
    </location>
</feature>
<feature type="binding site" evidence="1">
    <location>
        <position position="102"/>
    </location>
    <ligand>
        <name>substrate</name>
    </ligand>
</feature>
<feature type="binding site" evidence="1">
    <location>
        <position position="106"/>
    </location>
    <ligand>
        <name>a divalent metal cation</name>
        <dbReference type="ChEBI" id="CHEBI:60240"/>
    </ligand>
</feature>
<feature type="binding site" evidence="1">
    <location>
        <position position="116"/>
    </location>
    <ligand>
        <name>a divalent metal cation</name>
        <dbReference type="ChEBI" id="CHEBI:60240"/>
    </ligand>
</feature>
<feature type="binding site" evidence="1">
    <location>
        <begin position="118"/>
        <end position="120"/>
    </location>
    <ligand>
        <name>substrate</name>
    </ligand>
</feature>
<feature type="binding site" evidence="1">
    <location>
        <position position="149"/>
    </location>
    <ligand>
        <name>a divalent metal cation</name>
        <dbReference type="ChEBI" id="CHEBI:60240"/>
    </ligand>
</feature>
<feature type="binding site" evidence="1">
    <location>
        <position position="179"/>
    </location>
    <ligand>
        <name>a divalent metal cation</name>
        <dbReference type="ChEBI" id="CHEBI:60240"/>
    </ligand>
</feature>
<feature type="site" description="Important for dimerization" evidence="1">
    <location>
        <position position="179"/>
    </location>
</feature>
<gene>
    <name evidence="1" type="primary">hemF</name>
    <name type="ordered locus">RT0874</name>
</gene>
<organism>
    <name type="scientific">Rickettsia typhi (strain ATCC VR-144 / Wilmington)</name>
    <dbReference type="NCBI Taxonomy" id="257363"/>
    <lineage>
        <taxon>Bacteria</taxon>
        <taxon>Pseudomonadati</taxon>
        <taxon>Pseudomonadota</taxon>
        <taxon>Alphaproteobacteria</taxon>
        <taxon>Rickettsiales</taxon>
        <taxon>Rickettsiaceae</taxon>
        <taxon>Rickettsieae</taxon>
        <taxon>Rickettsia</taxon>
        <taxon>typhus group</taxon>
    </lineage>
</organism>
<proteinExistence type="inferred from homology"/>
<sequence length="279" mass="32313">MNTENKEITSNWFTNLRDLLCKEFEKIEEKYAQIKGLKPAKFVRTSWKRNGGGCGIMSLMKGEVFEKVGVNISTVFGEFSQEFRSEILGAELDGKFFATGISVVAHLKSPLIPAMHFNTRYIETSKNWFGGGSDLTPFYPEENETAKFHTAFKEACDKYDSSYYPKFKRQCDEYFYLRHRKEPRGVGGIFYDYLNSGNFEQDFAFTRDIGKALLSVYPEIVRSKLFLPWTDEQKEYQLIKRGRYVEFNLLYDRGTKFGLMTDGNIEAILMSLPPVVKFN</sequence>
<comment type="function">
    <text evidence="1">Involved in the heme biosynthesis. Catalyzes the aerobic oxidative decarboxylation of propionate groups of rings A and B of coproporphyrinogen-III to yield the vinyl groups in protoporphyrinogen-IX.</text>
</comment>
<comment type="catalytic activity">
    <reaction evidence="1">
        <text>coproporphyrinogen III + O2 + 2 H(+) = protoporphyrinogen IX + 2 CO2 + 2 H2O</text>
        <dbReference type="Rhea" id="RHEA:18257"/>
        <dbReference type="ChEBI" id="CHEBI:15377"/>
        <dbReference type="ChEBI" id="CHEBI:15378"/>
        <dbReference type="ChEBI" id="CHEBI:15379"/>
        <dbReference type="ChEBI" id="CHEBI:16526"/>
        <dbReference type="ChEBI" id="CHEBI:57307"/>
        <dbReference type="ChEBI" id="CHEBI:57309"/>
        <dbReference type="EC" id="1.3.3.3"/>
    </reaction>
</comment>
<comment type="cofactor">
    <cofactor evidence="1">
        <name>a divalent metal cation</name>
        <dbReference type="ChEBI" id="CHEBI:60240"/>
    </cofactor>
</comment>
<comment type="pathway">
    <text evidence="1">Porphyrin-containing compound metabolism; protoporphyrin-IX biosynthesis; protoporphyrinogen-IX from coproporphyrinogen-III (O2 route): step 1/1.</text>
</comment>
<comment type="subunit">
    <text evidence="1">Homodimer.</text>
</comment>
<comment type="subcellular location">
    <subcellularLocation>
        <location evidence="1">Cytoplasm</location>
    </subcellularLocation>
</comment>
<comment type="similarity">
    <text evidence="1">Belongs to the aerobic coproporphyrinogen-III oxidase family.</text>
</comment>
<keyword id="KW-0963">Cytoplasm</keyword>
<keyword id="KW-0350">Heme biosynthesis</keyword>
<keyword id="KW-0479">Metal-binding</keyword>
<keyword id="KW-0560">Oxidoreductase</keyword>
<keyword id="KW-0627">Porphyrin biosynthesis</keyword>
<evidence type="ECO:0000255" key="1">
    <source>
        <dbReference type="HAMAP-Rule" id="MF_00333"/>
    </source>
</evidence>